<sequence length="309" mass="34036">MSQQLPDVQASSPDVTVGLNRVGVTGVEKLVKLGRRDRDPIVLMAEFEVFVDLPSWRKGADMSRNMEVIDETLETAVSEEAYRVEDVCGDAAELLLEKHDYTTKAEVRMEAEYVTHESTPASEMATQSTADIIASATATEDGTSEEIGARVTGMTVCPCSQGMSASRARETLKQLNVEDDVIEEFLETNPQAGHSQRGHATLTVQSDGAPEVDLNELIEVARDSMSARIYNLAKRPDEDHMTYEAHKDAKFVEDCVRALAEGVVNTFPDLPDDAVVTMKQSNDESIHQHNAHAERVAQLDDLRQEVSED</sequence>
<protein>
    <recommendedName>
        <fullName evidence="1">GTP cyclohydrolase MptA</fullName>
        <ecNumber evidence="1">3.5.4.39</ecNumber>
    </recommendedName>
    <alternativeName>
        <fullName evidence="1">GTP cyclohydrolase IV</fullName>
    </alternativeName>
</protein>
<accession>Q5UXK3</accession>
<proteinExistence type="inferred from homology"/>
<reference key="1">
    <citation type="journal article" date="2004" name="Genome Res.">
        <title>Genome sequence of Haloarcula marismortui: a halophilic archaeon from the Dead Sea.</title>
        <authorList>
            <person name="Baliga N.S."/>
            <person name="Bonneau R."/>
            <person name="Facciotti M.T."/>
            <person name="Pan M."/>
            <person name="Glusman G."/>
            <person name="Deutsch E.W."/>
            <person name="Shannon P."/>
            <person name="Chiu Y."/>
            <person name="Weng R.S."/>
            <person name="Gan R.R."/>
            <person name="Hung P."/>
            <person name="Date S.V."/>
            <person name="Marcotte E."/>
            <person name="Hood L."/>
            <person name="Ng W.V."/>
        </authorList>
    </citation>
    <scope>NUCLEOTIDE SEQUENCE [LARGE SCALE GENOMIC DNA]</scope>
    <source>
        <strain>ATCC 43049 / DSM 3752 / JCM 8966 / VKM B-1809</strain>
    </source>
</reference>
<comment type="function">
    <text evidence="1">Converts GTP to 7,8-dihydro-D-neopterin 2',3'-cyclic phosphate, the first intermediate in the biosynthesis of coenzyme methanopterin.</text>
</comment>
<comment type="catalytic activity">
    <reaction evidence="1">
        <text>GTP + H2O = 7,8-dihydroneopterin 2',3'-cyclic phosphate + formate + diphosphate + H(+)</text>
        <dbReference type="Rhea" id="RHEA:25860"/>
        <dbReference type="ChEBI" id="CHEBI:15377"/>
        <dbReference type="ChEBI" id="CHEBI:15378"/>
        <dbReference type="ChEBI" id="CHEBI:15740"/>
        <dbReference type="ChEBI" id="CHEBI:33019"/>
        <dbReference type="ChEBI" id="CHEBI:37565"/>
        <dbReference type="ChEBI" id="CHEBI:58854"/>
        <dbReference type="EC" id="3.5.4.39"/>
    </reaction>
</comment>
<comment type="cofactor">
    <cofactor evidence="1">
        <name>Fe(2+)</name>
        <dbReference type="ChEBI" id="CHEBI:29033"/>
    </cofactor>
    <text evidence="1">Binds 1 Fe(2+) ion per subunit.</text>
</comment>
<comment type="pathway">
    <text evidence="1">Cofactor biosynthesis; 5,6,7,8-tetrahydromethanopterin biosynthesis.</text>
</comment>
<comment type="subunit">
    <text evidence="1">Homodimer.</text>
</comment>
<comment type="similarity">
    <text evidence="1">Belongs to the GTP cyclohydrolase IV family.</text>
</comment>
<dbReference type="EC" id="3.5.4.39" evidence="1"/>
<dbReference type="EMBL" id="AY596297">
    <property type="protein sequence ID" value="AAV48000.1"/>
    <property type="molecule type" value="Genomic_DNA"/>
</dbReference>
<dbReference type="RefSeq" id="WP_004964088.1">
    <property type="nucleotide sequence ID" value="NZ_CP039138.1"/>
</dbReference>
<dbReference type="SMR" id="Q5UXK3"/>
<dbReference type="STRING" id="272569.rrnAC3309"/>
<dbReference type="PaxDb" id="272569-rrnAC3309"/>
<dbReference type="EnsemblBacteria" id="AAV48000">
    <property type="protein sequence ID" value="AAV48000"/>
    <property type="gene ID" value="rrnAC3309"/>
</dbReference>
<dbReference type="GeneID" id="64823445"/>
<dbReference type="KEGG" id="hma:rrnAC3309"/>
<dbReference type="PATRIC" id="fig|272569.17.peg.3837"/>
<dbReference type="eggNOG" id="arCOG04301">
    <property type="taxonomic scope" value="Archaea"/>
</dbReference>
<dbReference type="HOGENOM" id="CLU_062816_1_0_2"/>
<dbReference type="UniPathway" id="UPA00065"/>
<dbReference type="Proteomes" id="UP000001169">
    <property type="component" value="Chromosome I"/>
</dbReference>
<dbReference type="GO" id="GO:0003934">
    <property type="term" value="F:GTP cyclohydrolase I activity"/>
    <property type="evidence" value="ECO:0007669"/>
    <property type="project" value="InterPro"/>
</dbReference>
<dbReference type="GO" id="GO:0044682">
    <property type="term" value="F:GTP cyclohydrolase IV activity"/>
    <property type="evidence" value="ECO:0007669"/>
    <property type="project" value="UniProtKB-UniRule"/>
</dbReference>
<dbReference type="GO" id="GO:0005506">
    <property type="term" value="F:iron ion binding"/>
    <property type="evidence" value="ECO:0007669"/>
    <property type="project" value="UniProtKB-UniRule"/>
</dbReference>
<dbReference type="GO" id="GO:2001118">
    <property type="term" value="P:tetrahydromethanopterin biosynthetic process"/>
    <property type="evidence" value="ECO:0007669"/>
    <property type="project" value="UniProtKB-UniRule"/>
</dbReference>
<dbReference type="Gene3D" id="3.10.270.10">
    <property type="entry name" value="Urate Oxidase"/>
    <property type="match status" value="1"/>
</dbReference>
<dbReference type="HAMAP" id="MF_01527_A">
    <property type="entry name" value="GTP_cyclohydrol_A"/>
    <property type="match status" value="1"/>
</dbReference>
<dbReference type="InterPro" id="IPR003801">
    <property type="entry name" value="GTP_cyclohydrolase_FolE2/MptA"/>
</dbReference>
<dbReference type="InterPro" id="IPR022840">
    <property type="entry name" value="GTP_cyclohydrolase_MptA"/>
</dbReference>
<dbReference type="NCBIfam" id="TIGR00294">
    <property type="entry name" value="GTP cyclohydrolase MptA"/>
    <property type="match status" value="1"/>
</dbReference>
<dbReference type="PANTHER" id="PTHR36445">
    <property type="entry name" value="GTP CYCLOHYDROLASE MPTA"/>
    <property type="match status" value="1"/>
</dbReference>
<dbReference type="PANTHER" id="PTHR36445:SF1">
    <property type="entry name" value="GTP CYCLOHYDROLASE MPTA"/>
    <property type="match status" value="1"/>
</dbReference>
<dbReference type="Pfam" id="PF02649">
    <property type="entry name" value="GCHY-1"/>
    <property type="match status" value="1"/>
</dbReference>
<name>MPTA_HALMA</name>
<evidence type="ECO:0000255" key="1">
    <source>
        <dbReference type="HAMAP-Rule" id="MF_01527"/>
    </source>
</evidence>
<organism>
    <name type="scientific">Haloarcula marismortui (strain ATCC 43049 / DSM 3752 / JCM 8966 / VKM B-1809)</name>
    <name type="common">Halobacterium marismortui</name>
    <dbReference type="NCBI Taxonomy" id="272569"/>
    <lineage>
        <taxon>Archaea</taxon>
        <taxon>Methanobacteriati</taxon>
        <taxon>Methanobacteriota</taxon>
        <taxon>Stenosarchaea group</taxon>
        <taxon>Halobacteria</taxon>
        <taxon>Halobacteriales</taxon>
        <taxon>Haloarculaceae</taxon>
        <taxon>Haloarcula</taxon>
    </lineage>
</organism>
<feature type="chain" id="PRO_0000147740" description="GTP cyclohydrolase MptA">
    <location>
        <begin position="1"/>
        <end position="309"/>
    </location>
</feature>
<feature type="site" description="May be catalytically important" evidence="1">
    <location>
        <position position="157"/>
    </location>
</feature>
<keyword id="KW-0378">Hydrolase</keyword>
<keyword id="KW-0408">Iron</keyword>
<keyword id="KW-0479">Metal-binding</keyword>
<keyword id="KW-1185">Reference proteome</keyword>
<gene>
    <name evidence="1" type="primary">mptA</name>
    <name type="ordered locus">rrnAC3309</name>
</gene>